<dbReference type="EC" id="2.7.7.6" evidence="1"/>
<dbReference type="EMBL" id="AE017340">
    <property type="protein sequence ID" value="AAV82723.1"/>
    <property type="molecule type" value="Genomic_DNA"/>
</dbReference>
<dbReference type="RefSeq" id="WP_011235123.1">
    <property type="nucleotide sequence ID" value="NC_006512.1"/>
</dbReference>
<dbReference type="SMR" id="Q5QXV8"/>
<dbReference type="STRING" id="283942.IL1891"/>
<dbReference type="GeneID" id="41337081"/>
<dbReference type="KEGG" id="ilo:IL1891"/>
<dbReference type="eggNOG" id="COG0202">
    <property type="taxonomic scope" value="Bacteria"/>
</dbReference>
<dbReference type="HOGENOM" id="CLU_053084_0_0_6"/>
<dbReference type="OrthoDB" id="9805706at2"/>
<dbReference type="Proteomes" id="UP000001171">
    <property type="component" value="Chromosome"/>
</dbReference>
<dbReference type="GO" id="GO:0005737">
    <property type="term" value="C:cytoplasm"/>
    <property type="evidence" value="ECO:0007669"/>
    <property type="project" value="UniProtKB-ARBA"/>
</dbReference>
<dbReference type="GO" id="GO:0000428">
    <property type="term" value="C:DNA-directed RNA polymerase complex"/>
    <property type="evidence" value="ECO:0007669"/>
    <property type="project" value="UniProtKB-KW"/>
</dbReference>
<dbReference type="GO" id="GO:0003677">
    <property type="term" value="F:DNA binding"/>
    <property type="evidence" value="ECO:0007669"/>
    <property type="project" value="UniProtKB-UniRule"/>
</dbReference>
<dbReference type="GO" id="GO:0003899">
    <property type="term" value="F:DNA-directed RNA polymerase activity"/>
    <property type="evidence" value="ECO:0007669"/>
    <property type="project" value="UniProtKB-UniRule"/>
</dbReference>
<dbReference type="GO" id="GO:0046983">
    <property type="term" value="F:protein dimerization activity"/>
    <property type="evidence" value="ECO:0007669"/>
    <property type="project" value="InterPro"/>
</dbReference>
<dbReference type="GO" id="GO:0006351">
    <property type="term" value="P:DNA-templated transcription"/>
    <property type="evidence" value="ECO:0007669"/>
    <property type="project" value="UniProtKB-UniRule"/>
</dbReference>
<dbReference type="CDD" id="cd06928">
    <property type="entry name" value="RNAP_alpha_NTD"/>
    <property type="match status" value="1"/>
</dbReference>
<dbReference type="FunFam" id="1.10.150.20:FF:000001">
    <property type="entry name" value="DNA-directed RNA polymerase subunit alpha"/>
    <property type="match status" value="1"/>
</dbReference>
<dbReference type="FunFam" id="2.170.120.12:FF:000001">
    <property type="entry name" value="DNA-directed RNA polymerase subunit alpha"/>
    <property type="match status" value="1"/>
</dbReference>
<dbReference type="Gene3D" id="1.10.150.20">
    <property type="entry name" value="5' to 3' exonuclease, C-terminal subdomain"/>
    <property type="match status" value="1"/>
</dbReference>
<dbReference type="Gene3D" id="2.170.120.12">
    <property type="entry name" value="DNA-directed RNA polymerase, insert domain"/>
    <property type="match status" value="1"/>
</dbReference>
<dbReference type="Gene3D" id="3.30.1360.10">
    <property type="entry name" value="RNA polymerase, RBP11-like subunit"/>
    <property type="match status" value="1"/>
</dbReference>
<dbReference type="HAMAP" id="MF_00059">
    <property type="entry name" value="RNApol_bact_RpoA"/>
    <property type="match status" value="1"/>
</dbReference>
<dbReference type="InterPro" id="IPR011262">
    <property type="entry name" value="DNA-dir_RNA_pol_insert"/>
</dbReference>
<dbReference type="InterPro" id="IPR011263">
    <property type="entry name" value="DNA-dir_RNA_pol_RpoA/D/Rpb3"/>
</dbReference>
<dbReference type="InterPro" id="IPR011773">
    <property type="entry name" value="DNA-dir_RpoA"/>
</dbReference>
<dbReference type="InterPro" id="IPR036603">
    <property type="entry name" value="RBP11-like"/>
</dbReference>
<dbReference type="InterPro" id="IPR011260">
    <property type="entry name" value="RNAP_asu_C"/>
</dbReference>
<dbReference type="InterPro" id="IPR036643">
    <property type="entry name" value="RNApol_insert_sf"/>
</dbReference>
<dbReference type="NCBIfam" id="NF003513">
    <property type="entry name" value="PRK05182.1-2"/>
    <property type="match status" value="1"/>
</dbReference>
<dbReference type="NCBIfam" id="NF003519">
    <property type="entry name" value="PRK05182.2-5"/>
    <property type="match status" value="1"/>
</dbReference>
<dbReference type="NCBIfam" id="TIGR02027">
    <property type="entry name" value="rpoA"/>
    <property type="match status" value="1"/>
</dbReference>
<dbReference type="Pfam" id="PF01000">
    <property type="entry name" value="RNA_pol_A_bac"/>
    <property type="match status" value="1"/>
</dbReference>
<dbReference type="Pfam" id="PF03118">
    <property type="entry name" value="RNA_pol_A_CTD"/>
    <property type="match status" value="1"/>
</dbReference>
<dbReference type="Pfam" id="PF01193">
    <property type="entry name" value="RNA_pol_L"/>
    <property type="match status" value="1"/>
</dbReference>
<dbReference type="SMART" id="SM00662">
    <property type="entry name" value="RPOLD"/>
    <property type="match status" value="1"/>
</dbReference>
<dbReference type="SUPFAM" id="SSF47789">
    <property type="entry name" value="C-terminal domain of RNA polymerase alpha subunit"/>
    <property type="match status" value="1"/>
</dbReference>
<dbReference type="SUPFAM" id="SSF56553">
    <property type="entry name" value="Insert subdomain of RNA polymerase alpha subunit"/>
    <property type="match status" value="1"/>
</dbReference>
<dbReference type="SUPFAM" id="SSF55257">
    <property type="entry name" value="RBP11-like subunits of RNA polymerase"/>
    <property type="match status" value="1"/>
</dbReference>
<keyword id="KW-0240">DNA-directed RNA polymerase</keyword>
<keyword id="KW-0548">Nucleotidyltransferase</keyword>
<keyword id="KW-1185">Reference proteome</keyword>
<keyword id="KW-0804">Transcription</keyword>
<keyword id="KW-0808">Transferase</keyword>
<comment type="function">
    <text evidence="1">DNA-dependent RNA polymerase catalyzes the transcription of DNA into RNA using the four ribonucleoside triphosphates as substrates.</text>
</comment>
<comment type="catalytic activity">
    <reaction evidence="1">
        <text>RNA(n) + a ribonucleoside 5'-triphosphate = RNA(n+1) + diphosphate</text>
        <dbReference type="Rhea" id="RHEA:21248"/>
        <dbReference type="Rhea" id="RHEA-COMP:14527"/>
        <dbReference type="Rhea" id="RHEA-COMP:17342"/>
        <dbReference type="ChEBI" id="CHEBI:33019"/>
        <dbReference type="ChEBI" id="CHEBI:61557"/>
        <dbReference type="ChEBI" id="CHEBI:140395"/>
        <dbReference type="EC" id="2.7.7.6"/>
    </reaction>
</comment>
<comment type="subunit">
    <text evidence="1">Homodimer. The RNAP catalytic core consists of 2 alpha, 1 beta, 1 beta' and 1 omega subunit. When a sigma factor is associated with the core the holoenzyme is formed, which can initiate transcription.</text>
</comment>
<comment type="domain">
    <text evidence="1">The N-terminal domain is essential for RNAP assembly and basal transcription, whereas the C-terminal domain is involved in interaction with transcriptional regulators and with upstream promoter elements.</text>
</comment>
<comment type="similarity">
    <text evidence="1">Belongs to the RNA polymerase alpha chain family.</text>
</comment>
<gene>
    <name evidence="1" type="primary">rpoA</name>
    <name type="ordered locus">IL1891</name>
</gene>
<reference key="1">
    <citation type="journal article" date="2004" name="Proc. Natl. Acad. Sci. U.S.A.">
        <title>Genome sequence of the deep-sea gamma-proteobacterium Idiomarina loihiensis reveals amino acid fermentation as a source of carbon and energy.</title>
        <authorList>
            <person name="Hou S."/>
            <person name="Saw J.H."/>
            <person name="Lee K.S."/>
            <person name="Freitas T.A."/>
            <person name="Belisle C."/>
            <person name="Kawarabayasi Y."/>
            <person name="Donachie S.P."/>
            <person name="Pikina A."/>
            <person name="Galperin M.Y."/>
            <person name="Koonin E.V."/>
            <person name="Makarova K.S."/>
            <person name="Omelchenko M.V."/>
            <person name="Sorokin A."/>
            <person name="Wolf Y.I."/>
            <person name="Li Q.X."/>
            <person name="Keum Y.S."/>
            <person name="Campbell S."/>
            <person name="Denery J."/>
            <person name="Aizawa S."/>
            <person name="Shibata S."/>
            <person name="Malahoff A."/>
            <person name="Alam M."/>
        </authorList>
    </citation>
    <scope>NUCLEOTIDE SEQUENCE [LARGE SCALE GENOMIC DNA]</scope>
    <source>
        <strain>ATCC BAA-735 / DSM 15497 / L2-TR</strain>
    </source>
</reference>
<sequence>MQGSVTEFLKPRLVDIEQISPTHAKVTLEPLERGFGYTLGNALRRILLSSMPGCAVTEVEIDGVLHEYSSKEGVQEDVIEVLLNLKGLAVSVEGKDEATLTLNKSGAGPVTAGDFTHDGDVEIVNPEHVICHLTGDYELVMRVKVERGRGYVPAASRQSADDDERPIGRLLVDASFSPVERIAYSVDAARVEQRTDLDKLVIEMETNGTLDPEEAIRRAATILAEQLDAFVELRDISEPEEKEEKPEFDPILLRPVDDLELTVRSANCLKAEAIQYIGDLVQRTEVELLKTPNLGKKSLTEIKDVLASRGLSLGMRLENWPPASLIDND</sequence>
<feature type="chain" id="PRO_0000175318" description="DNA-directed RNA polymerase subunit alpha">
    <location>
        <begin position="1"/>
        <end position="329"/>
    </location>
</feature>
<feature type="region of interest" description="Alpha N-terminal domain (alpha-NTD)" evidence="1">
    <location>
        <begin position="1"/>
        <end position="234"/>
    </location>
</feature>
<feature type="region of interest" description="Alpha C-terminal domain (alpha-CTD)" evidence="1">
    <location>
        <begin position="248"/>
        <end position="329"/>
    </location>
</feature>
<organism>
    <name type="scientific">Idiomarina loihiensis (strain ATCC BAA-735 / DSM 15497 / L2-TR)</name>
    <dbReference type="NCBI Taxonomy" id="283942"/>
    <lineage>
        <taxon>Bacteria</taxon>
        <taxon>Pseudomonadati</taxon>
        <taxon>Pseudomonadota</taxon>
        <taxon>Gammaproteobacteria</taxon>
        <taxon>Alteromonadales</taxon>
        <taxon>Idiomarinaceae</taxon>
        <taxon>Idiomarina</taxon>
    </lineage>
</organism>
<protein>
    <recommendedName>
        <fullName evidence="1">DNA-directed RNA polymerase subunit alpha</fullName>
        <shortName evidence="1">RNAP subunit alpha</shortName>
        <ecNumber evidence="1">2.7.7.6</ecNumber>
    </recommendedName>
    <alternativeName>
        <fullName evidence="1">RNA polymerase subunit alpha</fullName>
    </alternativeName>
    <alternativeName>
        <fullName evidence="1">Transcriptase subunit alpha</fullName>
    </alternativeName>
</protein>
<proteinExistence type="inferred from homology"/>
<name>RPOA_IDILO</name>
<evidence type="ECO:0000255" key="1">
    <source>
        <dbReference type="HAMAP-Rule" id="MF_00059"/>
    </source>
</evidence>
<accession>Q5QXV8</accession>